<evidence type="ECO:0000250" key="1"/>
<evidence type="ECO:0000305" key="2"/>
<organism>
    <name type="scientific">Mycobacterium tuberculosis (strain ATCC 25618 / H37Rv)</name>
    <dbReference type="NCBI Taxonomy" id="83332"/>
    <lineage>
        <taxon>Bacteria</taxon>
        <taxon>Bacillati</taxon>
        <taxon>Actinomycetota</taxon>
        <taxon>Actinomycetes</taxon>
        <taxon>Mycobacteriales</taxon>
        <taxon>Mycobacteriaceae</taxon>
        <taxon>Mycobacterium</taxon>
        <taxon>Mycobacterium tuberculosis complex</taxon>
    </lineage>
</organism>
<sequence>MAFPVISTYRVQMRGRSNGFGFTFADAENLLDYLDDLGVSHLYLSPILTAVGGSTHGYDVTDPTTVSPELGGSDGLARLSAAARSRGMGLIVDIVPSHVGVGKPEQNAWWWDVLKFGRSSAYAEFFDIDWELGDGRIILPLLGSDSDVANLRVDGDLLRLGDLALPVAPGSGDGTGPAVHDRQHYRLVGWRHGLCGYRRFFSITSLAGLRQEDRAVFDASHAEVARWFTEGLVDGVRVDHLDGLSDPSGYLAQLRELLGPNAWIVVEKILAVDEALEPTLPVDGSTGYDVLREIGGVLVDPQGESPLTALVESAGVDYQEMPAMLADLKVHAAVHTLASELRRLRRCIAAAAGADHPLLPAAVAALLRHIGRYRCDYPGQAAVLPCALAETHSTTPQLAPGLQLIAAAVARGGEPAVRLQQLCGAVSAKAVEDCMFYRDARLVSLNEVGGEPRRFGVGAAEFHHRAATRARLWPRSMTTLSTHDTKRGEDVRARIGVLSQVPWLWAKFIGHAQAIAPAPDAVTGQFLWQNVFGVWPVSGEVSAALRGRLHTYAEKAIREAAWHTSWHNPNRAFEDDVHGWLDLVLDGPLASELTGLVAHLNSHAESDALAAKLLALTVPGVPDVYQGSELWDDSLVDPDNRRPVDYGTRRVALKALQHPKIRVLAAALRLRRTHPESFLGGAYHPVFAAGPAADHVVAFRRGDDILVAVTRWTVRLQQTGWDHTVLPLPDGSWTDALTGFTASGHTPAVELFADLPVVLLVRDNA</sequence>
<feature type="chain" id="PRO_0000054342" description="Putative maltooligosyl trehalose synthase">
    <location>
        <begin position="1"/>
        <end position="765"/>
    </location>
</feature>
<reference key="1">
    <citation type="journal article" date="1998" name="Nature">
        <title>Deciphering the biology of Mycobacterium tuberculosis from the complete genome sequence.</title>
        <authorList>
            <person name="Cole S.T."/>
            <person name="Brosch R."/>
            <person name="Parkhill J."/>
            <person name="Garnier T."/>
            <person name="Churcher C.M."/>
            <person name="Harris D.E."/>
            <person name="Gordon S.V."/>
            <person name="Eiglmeier K."/>
            <person name="Gas S."/>
            <person name="Barry C.E. III"/>
            <person name="Tekaia F."/>
            <person name="Badcock K."/>
            <person name="Basham D."/>
            <person name="Brown D."/>
            <person name="Chillingworth T."/>
            <person name="Connor R."/>
            <person name="Davies R.M."/>
            <person name="Devlin K."/>
            <person name="Feltwell T."/>
            <person name="Gentles S."/>
            <person name="Hamlin N."/>
            <person name="Holroyd S."/>
            <person name="Hornsby T."/>
            <person name="Jagels K."/>
            <person name="Krogh A."/>
            <person name="McLean J."/>
            <person name="Moule S."/>
            <person name="Murphy L.D."/>
            <person name="Oliver S."/>
            <person name="Osborne J."/>
            <person name="Quail M.A."/>
            <person name="Rajandream M.A."/>
            <person name="Rogers J."/>
            <person name="Rutter S."/>
            <person name="Seeger K."/>
            <person name="Skelton S."/>
            <person name="Squares S."/>
            <person name="Squares R."/>
            <person name="Sulston J.E."/>
            <person name="Taylor K."/>
            <person name="Whitehead S."/>
            <person name="Barrell B.G."/>
        </authorList>
    </citation>
    <scope>NUCLEOTIDE SEQUENCE [LARGE SCALE GENOMIC DNA]</scope>
    <source>
        <strain>ATCC 25618 / H37Rv</strain>
    </source>
</reference>
<reference key="2">
    <citation type="journal article" date="2011" name="Mol. Cell. Proteomics">
        <title>Proteogenomic analysis of Mycobacterium tuberculosis by high resolution mass spectrometry.</title>
        <authorList>
            <person name="Kelkar D.S."/>
            <person name="Kumar D."/>
            <person name="Kumar P."/>
            <person name="Balakrishnan L."/>
            <person name="Muthusamy B."/>
            <person name="Yadav A.K."/>
            <person name="Shrivastava P."/>
            <person name="Marimuthu A."/>
            <person name="Anand S."/>
            <person name="Sundaram H."/>
            <person name="Kingsbury R."/>
            <person name="Harsha H.C."/>
            <person name="Nair B."/>
            <person name="Prasad T.S."/>
            <person name="Chauhan D.S."/>
            <person name="Katoch K."/>
            <person name="Katoch V.M."/>
            <person name="Kumar P."/>
            <person name="Chaerkady R."/>
            <person name="Ramachandran S."/>
            <person name="Dash D."/>
            <person name="Pandey A."/>
        </authorList>
    </citation>
    <scope>IDENTIFICATION BY MASS SPECTROMETRY [LARGE SCALE ANALYSIS]</scope>
    <source>
        <strain>ATCC 25618 / H37Rv</strain>
    </source>
</reference>
<accession>P9WQ21</accession>
<accession>L0T775</accession>
<accession>Q10768</accession>
<gene>
    <name type="primary">treY</name>
    <name type="ordered locus">Rv1563c</name>
    <name type="ORF">MTCY48.02</name>
</gene>
<dbReference type="EC" id="5.4.99.15"/>
<dbReference type="EMBL" id="AL123456">
    <property type="protein sequence ID" value="CCP44327.1"/>
    <property type="molecule type" value="Genomic_DNA"/>
</dbReference>
<dbReference type="PIR" id="H70763">
    <property type="entry name" value="H70763"/>
</dbReference>
<dbReference type="RefSeq" id="WP_003407790.1">
    <property type="nucleotide sequence ID" value="NZ_NVQJ01000004.1"/>
</dbReference>
<dbReference type="RefSeq" id="YP_177820.1">
    <property type="nucleotide sequence ID" value="NC_000962.3"/>
</dbReference>
<dbReference type="SMR" id="P9WQ21"/>
<dbReference type="FunCoup" id="P9WQ21">
    <property type="interactions" value="23"/>
</dbReference>
<dbReference type="STRING" id="83332.Rv1563c"/>
<dbReference type="PaxDb" id="83332-Rv1563c"/>
<dbReference type="DNASU" id="886357"/>
<dbReference type="GeneID" id="886357"/>
<dbReference type="KEGG" id="mtu:Rv1563c"/>
<dbReference type="KEGG" id="mtv:RVBD_1563c"/>
<dbReference type="TubercuList" id="Rv1563c"/>
<dbReference type="eggNOG" id="COG3280">
    <property type="taxonomic scope" value="Bacteria"/>
</dbReference>
<dbReference type="InParanoid" id="P9WQ21"/>
<dbReference type="OrthoDB" id="9761577at2"/>
<dbReference type="PhylomeDB" id="P9WQ21"/>
<dbReference type="Reactome" id="R-MTU-868688">
    <property type="pathway name" value="Trehalose biosynthesis"/>
</dbReference>
<dbReference type="Proteomes" id="UP000001584">
    <property type="component" value="Chromosome"/>
</dbReference>
<dbReference type="GO" id="GO:0005829">
    <property type="term" value="C:cytosol"/>
    <property type="evidence" value="ECO:0000304"/>
    <property type="project" value="Reactome"/>
</dbReference>
<dbReference type="GO" id="GO:0047470">
    <property type="term" value="F:(1,4)-alpha-D-glucan 1-alpha-D-glucosylmutase activity"/>
    <property type="evidence" value="ECO:0000314"/>
    <property type="project" value="MTBBASE"/>
</dbReference>
<dbReference type="GO" id="GO:0030980">
    <property type="term" value="P:alpha-glucan catabolic process"/>
    <property type="evidence" value="ECO:0000314"/>
    <property type="project" value="MTBBASE"/>
</dbReference>
<dbReference type="GO" id="GO:0005992">
    <property type="term" value="P:trehalose biosynthetic process"/>
    <property type="evidence" value="ECO:0000314"/>
    <property type="project" value="MTBBASE"/>
</dbReference>
<dbReference type="CDD" id="cd11336">
    <property type="entry name" value="AmyAc_MTSase"/>
    <property type="match status" value="1"/>
</dbReference>
<dbReference type="Gene3D" id="3.20.20.80">
    <property type="entry name" value="Glycosidases"/>
    <property type="match status" value="1"/>
</dbReference>
<dbReference type="Gene3D" id="3.30.1590.10">
    <property type="entry name" value="Maltooligosyl trehalose synthase, domain 2"/>
    <property type="match status" value="1"/>
</dbReference>
<dbReference type="Gene3D" id="1.10.150.200">
    <property type="entry name" value="Maltooligosyl trehalose synthase, domain 3"/>
    <property type="match status" value="1"/>
</dbReference>
<dbReference type="Gene3D" id="1.10.10.470">
    <property type="entry name" value="Maltooligosyl trehalose synthase, domain 4"/>
    <property type="match status" value="1"/>
</dbReference>
<dbReference type="InterPro" id="IPR006047">
    <property type="entry name" value="Glyco_hydro_13_cat_dom"/>
</dbReference>
<dbReference type="InterPro" id="IPR017853">
    <property type="entry name" value="Glycoside_hydrolase_SF"/>
</dbReference>
<dbReference type="InterPro" id="IPR013797">
    <property type="entry name" value="Maltooligo_trehalose_synth_4"/>
</dbReference>
<dbReference type="InterPro" id="IPR012767">
    <property type="entry name" value="Trehalose_TreY"/>
</dbReference>
<dbReference type="NCBIfam" id="TIGR02401">
    <property type="entry name" value="trehalose_TreY"/>
    <property type="match status" value="1"/>
</dbReference>
<dbReference type="PANTHER" id="PTHR10357">
    <property type="entry name" value="ALPHA-AMYLASE FAMILY MEMBER"/>
    <property type="match status" value="1"/>
</dbReference>
<dbReference type="PANTHER" id="PTHR10357:SF216">
    <property type="entry name" value="MALTOOLIGOSYL TREHALOSE SYNTHASE-RELATED"/>
    <property type="match status" value="1"/>
</dbReference>
<dbReference type="Pfam" id="PF00128">
    <property type="entry name" value="Alpha-amylase"/>
    <property type="match status" value="1"/>
</dbReference>
<dbReference type="SMART" id="SM00642">
    <property type="entry name" value="Aamy"/>
    <property type="match status" value="1"/>
</dbReference>
<dbReference type="SUPFAM" id="SSF51445">
    <property type="entry name" value="(Trans)glycosidases"/>
    <property type="match status" value="1"/>
</dbReference>
<comment type="function">
    <text evidence="1">Catalyzes the conversion of maltooligosaccharide into the non-reducing saccharide, maltooligosyl trehalose (alpha-maltooligosyl alpha-D-glucoside) by intramolecular transglycosylation.</text>
</comment>
<comment type="catalytic activity">
    <reaction>
        <text>4-[(1-&gt;4)-alpha-D-glucosyl](n-1)-D-glucose = 1-[(1-&gt;4)-alpha-D-glucosyl](n-1)-alpha-D-glucose</text>
        <dbReference type="Rhea" id="RHEA:13621"/>
        <dbReference type="Rhea" id="RHEA-COMP:14708"/>
        <dbReference type="Rhea" id="RHEA-COMP:14709"/>
        <dbReference type="ChEBI" id="CHEBI:140774"/>
        <dbReference type="ChEBI" id="CHEBI:140775"/>
        <dbReference type="EC" id="5.4.99.15"/>
    </reaction>
</comment>
<comment type="subunit">
    <text evidence="1">Monomer.</text>
</comment>
<comment type="similarity">
    <text evidence="2">Belongs to the glycosyl hydrolase 13 family.</text>
</comment>
<protein>
    <recommendedName>
        <fullName>Putative maltooligosyl trehalose synthase</fullName>
        <ecNumber>5.4.99.15</ecNumber>
    </recommendedName>
    <alternativeName>
        <fullName>(1,4)-alpha-D-glucan 1-alpha-D-glucosylmutase</fullName>
    </alternativeName>
</protein>
<keyword id="KW-0413">Isomerase</keyword>
<keyword id="KW-1185">Reference proteome</keyword>
<name>TREY_MYCTU</name>
<proteinExistence type="evidence at protein level"/>